<comment type="subcellular location">
    <subcellularLocation>
        <location evidence="4">Endoplasmic reticulum membrane</location>
        <topology evidence="4">Multi-pass membrane protein</topology>
    </subcellularLocation>
</comment>
<comment type="similarity">
    <text evidence="5">Belongs to the CitM (TC 2.A.11) transporter family.</text>
</comment>
<evidence type="ECO:0000255" key="1"/>
<evidence type="ECO:0000255" key="2">
    <source>
        <dbReference type="PROSITE-ProRule" id="PRU00714"/>
    </source>
</evidence>
<evidence type="ECO:0000256" key="3">
    <source>
        <dbReference type="SAM" id="MobiDB-lite"/>
    </source>
</evidence>
<evidence type="ECO:0000269" key="4">
    <source>
    </source>
</evidence>
<evidence type="ECO:0000305" key="5"/>
<gene>
    <name type="ORF">SPBC3B8.04c</name>
</gene>
<feature type="chain" id="PRO_0000303946" description="Uncharacterized transporter C3B8.04c">
    <location>
        <begin position="1"/>
        <end position="867"/>
    </location>
</feature>
<feature type="transmembrane region" description="Helical" evidence="1">
    <location>
        <begin position="406"/>
        <end position="426"/>
    </location>
</feature>
<feature type="transmembrane region" description="Helical" evidence="1">
    <location>
        <begin position="434"/>
        <end position="454"/>
    </location>
</feature>
<feature type="transmembrane region" description="Helical" evidence="1">
    <location>
        <begin position="485"/>
        <end position="505"/>
    </location>
</feature>
<feature type="transmembrane region" description="Helical" evidence="1">
    <location>
        <begin position="537"/>
        <end position="557"/>
    </location>
</feature>
<feature type="transmembrane region" description="Helical" evidence="1">
    <location>
        <begin position="576"/>
        <end position="596"/>
    </location>
</feature>
<feature type="transmembrane region" description="Helical" evidence="1">
    <location>
        <begin position="616"/>
        <end position="636"/>
    </location>
</feature>
<feature type="transmembrane region" description="Helical" evidence="1">
    <location>
        <begin position="656"/>
        <end position="676"/>
    </location>
</feature>
<feature type="transmembrane region" description="Helical" evidence="1">
    <location>
        <begin position="683"/>
        <end position="703"/>
    </location>
</feature>
<feature type="transmembrane region" description="Helical" evidence="1">
    <location>
        <begin position="712"/>
        <end position="732"/>
    </location>
</feature>
<feature type="transmembrane region" description="Helical" evidence="1">
    <location>
        <begin position="755"/>
        <end position="775"/>
    </location>
</feature>
<feature type="transmembrane region" description="Helical" evidence="1">
    <location>
        <begin position="797"/>
        <end position="817"/>
    </location>
</feature>
<feature type="transmembrane region" description="Helical" evidence="1">
    <location>
        <begin position="842"/>
        <end position="862"/>
    </location>
</feature>
<feature type="domain" description="SPX" evidence="2">
    <location>
        <begin position="1"/>
        <end position="294"/>
    </location>
</feature>
<feature type="region of interest" description="Disordered" evidence="3">
    <location>
        <begin position="105"/>
        <end position="152"/>
    </location>
</feature>
<feature type="region of interest" description="Disordered" evidence="3">
    <location>
        <begin position="165"/>
        <end position="228"/>
    </location>
</feature>
<feature type="compositionally biased region" description="Polar residues" evidence="3">
    <location>
        <begin position="138"/>
        <end position="152"/>
    </location>
</feature>
<feature type="compositionally biased region" description="Acidic residues" evidence="3">
    <location>
        <begin position="198"/>
        <end position="223"/>
    </location>
</feature>
<accession>O59712</accession>
<organism>
    <name type="scientific">Schizosaccharomyces pombe (strain 972 / ATCC 24843)</name>
    <name type="common">Fission yeast</name>
    <dbReference type="NCBI Taxonomy" id="284812"/>
    <lineage>
        <taxon>Eukaryota</taxon>
        <taxon>Fungi</taxon>
        <taxon>Dikarya</taxon>
        <taxon>Ascomycota</taxon>
        <taxon>Taphrinomycotina</taxon>
        <taxon>Schizosaccharomycetes</taxon>
        <taxon>Schizosaccharomycetales</taxon>
        <taxon>Schizosaccharomycetaceae</taxon>
        <taxon>Schizosaccharomyces</taxon>
    </lineage>
</organism>
<sequence length="867" mass="97050">MKFSHSLQFNAVPEWSESYIAYSNLKKLIYSLEHEQITLQQGAPDEETRLLEHERRSPDDRFMFALDKELQGIVEFYAPKEKEIADQYGRIKGEFETYENEYMSQGNNINYPTPERLQKSSASRKSGRMARSQELPRITSSNREIYLNGQTSDGGYAAPAISRAESTAIQPSEPHDVDTSKNGLSKKQHSEAQPEVQGNDDEVEEEDDDDDDEDEDEDEDEDNNNNNRWLLIEQYPSDIVAYENFVSLKRKLTQLYVSIHDLISYVHLNYTGFSKILKKYDKTLGSSLRESYMKRVNQAYPFLPATGKTLSKRLNIVAEWYAKLCCQGDTFVAIRRLRGHLREYVAWERNTIWREMMAMERRTQAARLSGLKPVAADEKESEQPPYFTIKTKFGVFRIPRCFFNSTIATLITIIVIFILLLSFPVIDNREQNNCLALLVMVSLLWATEAIPLFVTSFLVPFMTVFLKILRDENGSPLSGKESTKVIFSSMWNPTIVLLLGGFTIAAALSKYHIAKRLATSILAHAGRKPRSVLLTNMFVAMFASMWISNVAAPVLCFSIIQPLLRNLPAESDFAKILIVGIALASNVGGIASPISSPQNIVALQNMDPAAGWGEWFAVSIPVSLLCIFSIWFLLSFGLLKDEHITLAKIRSTKDTFTGVQWFISIVTIGTIVLWCLERRFDEVFGDMGVIALVPIIVFFGTGLLTKEDFNNFLWTVIVLAMGGVALGKVVSSSGLLELIALKIGNAVSSLNTFRVLLIFSALTLVVSSFISHIVAAMVVLPIVHEVGSRLADPHPRLFVLASGMMCSLAMALPTSGFPNMTAIMMENEAGKRYLKVSDFLKAGIPATLISFVILLLIGTPIMRALGF</sequence>
<proteinExistence type="inferred from homology"/>
<dbReference type="EMBL" id="CU329671">
    <property type="protein sequence ID" value="CAA18293.1"/>
    <property type="molecule type" value="Genomic_DNA"/>
</dbReference>
<dbReference type="PIR" id="T40336">
    <property type="entry name" value="T40336"/>
</dbReference>
<dbReference type="SMR" id="O59712"/>
<dbReference type="BioGRID" id="276810">
    <property type="interactions" value="29"/>
</dbReference>
<dbReference type="FunCoup" id="O59712">
    <property type="interactions" value="172"/>
</dbReference>
<dbReference type="STRING" id="284812.O59712"/>
<dbReference type="iPTMnet" id="O59712"/>
<dbReference type="PaxDb" id="4896-SPBC3B8.04c.1"/>
<dbReference type="EnsemblFungi" id="SPBC3B8.04c.1">
    <property type="protein sequence ID" value="SPBC3B8.04c.1:pep"/>
    <property type="gene ID" value="SPBC3B8.04c"/>
</dbReference>
<dbReference type="KEGG" id="spo:2540279"/>
<dbReference type="PomBase" id="SPBC3B8.04c"/>
<dbReference type="VEuPathDB" id="FungiDB:SPBC3B8.04c"/>
<dbReference type="eggNOG" id="KOG1281">
    <property type="taxonomic scope" value="Eukaryota"/>
</dbReference>
<dbReference type="HOGENOM" id="CLU_005170_8_0_1"/>
<dbReference type="InParanoid" id="O59712"/>
<dbReference type="OMA" id="GYGLMYI"/>
<dbReference type="PhylomeDB" id="O59712"/>
<dbReference type="PRO" id="PR:O59712"/>
<dbReference type="Proteomes" id="UP000002485">
    <property type="component" value="Chromosome II"/>
</dbReference>
<dbReference type="GO" id="GO:0005783">
    <property type="term" value="C:endoplasmic reticulum"/>
    <property type="evidence" value="ECO:0007005"/>
    <property type="project" value="PomBase"/>
</dbReference>
<dbReference type="GO" id="GO:0005789">
    <property type="term" value="C:endoplasmic reticulum membrane"/>
    <property type="evidence" value="ECO:0007669"/>
    <property type="project" value="UniProtKB-SubCell"/>
</dbReference>
<dbReference type="GO" id="GO:0005886">
    <property type="term" value="C:plasma membrane"/>
    <property type="evidence" value="ECO:0000318"/>
    <property type="project" value="GO_Central"/>
</dbReference>
<dbReference type="GO" id="GO:0005315">
    <property type="term" value="F:phosphate transmembrane transporter activity"/>
    <property type="evidence" value="ECO:0000318"/>
    <property type="project" value="GO_Central"/>
</dbReference>
<dbReference type="GO" id="GO:0035435">
    <property type="term" value="P:phosphate ion transmembrane transport"/>
    <property type="evidence" value="ECO:0000266"/>
    <property type="project" value="PomBase"/>
</dbReference>
<dbReference type="GO" id="GO:0006817">
    <property type="term" value="P:phosphate ion transport"/>
    <property type="evidence" value="ECO:0000318"/>
    <property type="project" value="GO_Central"/>
</dbReference>
<dbReference type="GO" id="GO:0006797">
    <property type="term" value="P:polyphosphate metabolic process"/>
    <property type="evidence" value="ECO:0000318"/>
    <property type="project" value="GO_Central"/>
</dbReference>
<dbReference type="GO" id="GO:0055085">
    <property type="term" value="P:transmembrane transport"/>
    <property type="evidence" value="ECO:0000318"/>
    <property type="project" value="GO_Central"/>
</dbReference>
<dbReference type="CDD" id="cd01115">
    <property type="entry name" value="SLC13_permease"/>
    <property type="match status" value="1"/>
</dbReference>
<dbReference type="CDD" id="cd14478">
    <property type="entry name" value="SPX_PHO87_PHO90_like"/>
    <property type="match status" value="1"/>
</dbReference>
<dbReference type="InterPro" id="IPR001898">
    <property type="entry name" value="SLC13A/DASS"/>
</dbReference>
<dbReference type="InterPro" id="IPR004331">
    <property type="entry name" value="SPX_dom"/>
</dbReference>
<dbReference type="PANTHER" id="PTHR10283:SF92">
    <property type="entry name" value="LOW-AFFINITY PHOSPHATE TRANSPORTER PHO91"/>
    <property type="match status" value="1"/>
</dbReference>
<dbReference type="PANTHER" id="PTHR10283">
    <property type="entry name" value="SOLUTE CARRIER FAMILY 13 MEMBER"/>
    <property type="match status" value="1"/>
</dbReference>
<dbReference type="Pfam" id="PF00939">
    <property type="entry name" value="Na_sulph_symp"/>
    <property type="match status" value="1"/>
</dbReference>
<dbReference type="Pfam" id="PF03105">
    <property type="entry name" value="SPX"/>
    <property type="match status" value="2"/>
</dbReference>
<dbReference type="PROSITE" id="PS51382">
    <property type="entry name" value="SPX"/>
    <property type="match status" value="1"/>
</dbReference>
<reference key="1">
    <citation type="journal article" date="2002" name="Nature">
        <title>The genome sequence of Schizosaccharomyces pombe.</title>
        <authorList>
            <person name="Wood V."/>
            <person name="Gwilliam R."/>
            <person name="Rajandream M.A."/>
            <person name="Lyne M.H."/>
            <person name="Lyne R."/>
            <person name="Stewart A."/>
            <person name="Sgouros J.G."/>
            <person name="Peat N."/>
            <person name="Hayles J."/>
            <person name="Baker S.G."/>
            <person name="Basham D."/>
            <person name="Bowman S."/>
            <person name="Brooks K."/>
            <person name="Brown D."/>
            <person name="Brown S."/>
            <person name="Chillingworth T."/>
            <person name="Churcher C.M."/>
            <person name="Collins M."/>
            <person name="Connor R."/>
            <person name="Cronin A."/>
            <person name="Davis P."/>
            <person name="Feltwell T."/>
            <person name="Fraser A."/>
            <person name="Gentles S."/>
            <person name="Goble A."/>
            <person name="Hamlin N."/>
            <person name="Harris D.E."/>
            <person name="Hidalgo J."/>
            <person name="Hodgson G."/>
            <person name="Holroyd S."/>
            <person name="Hornsby T."/>
            <person name="Howarth S."/>
            <person name="Huckle E.J."/>
            <person name="Hunt S."/>
            <person name="Jagels K."/>
            <person name="James K.D."/>
            <person name="Jones L."/>
            <person name="Jones M."/>
            <person name="Leather S."/>
            <person name="McDonald S."/>
            <person name="McLean J."/>
            <person name="Mooney P."/>
            <person name="Moule S."/>
            <person name="Mungall K.L."/>
            <person name="Murphy L.D."/>
            <person name="Niblett D."/>
            <person name="Odell C."/>
            <person name="Oliver K."/>
            <person name="O'Neil S."/>
            <person name="Pearson D."/>
            <person name="Quail M.A."/>
            <person name="Rabbinowitsch E."/>
            <person name="Rutherford K.M."/>
            <person name="Rutter S."/>
            <person name="Saunders D."/>
            <person name="Seeger K."/>
            <person name="Sharp S."/>
            <person name="Skelton J."/>
            <person name="Simmonds M.N."/>
            <person name="Squares R."/>
            <person name="Squares S."/>
            <person name="Stevens K."/>
            <person name="Taylor K."/>
            <person name="Taylor R.G."/>
            <person name="Tivey A."/>
            <person name="Walsh S.V."/>
            <person name="Warren T."/>
            <person name="Whitehead S."/>
            <person name="Woodward J.R."/>
            <person name="Volckaert G."/>
            <person name="Aert R."/>
            <person name="Robben J."/>
            <person name="Grymonprez B."/>
            <person name="Weltjens I."/>
            <person name="Vanstreels E."/>
            <person name="Rieger M."/>
            <person name="Schaefer M."/>
            <person name="Mueller-Auer S."/>
            <person name="Gabel C."/>
            <person name="Fuchs M."/>
            <person name="Duesterhoeft A."/>
            <person name="Fritzc C."/>
            <person name="Holzer E."/>
            <person name="Moestl D."/>
            <person name="Hilbert H."/>
            <person name="Borzym K."/>
            <person name="Langer I."/>
            <person name="Beck A."/>
            <person name="Lehrach H."/>
            <person name="Reinhardt R."/>
            <person name="Pohl T.M."/>
            <person name="Eger P."/>
            <person name="Zimmermann W."/>
            <person name="Wedler H."/>
            <person name="Wambutt R."/>
            <person name="Purnelle B."/>
            <person name="Goffeau A."/>
            <person name="Cadieu E."/>
            <person name="Dreano S."/>
            <person name="Gloux S."/>
            <person name="Lelaure V."/>
            <person name="Mottier S."/>
            <person name="Galibert F."/>
            <person name="Aves S.J."/>
            <person name="Xiang Z."/>
            <person name="Hunt C."/>
            <person name="Moore K."/>
            <person name="Hurst S.M."/>
            <person name="Lucas M."/>
            <person name="Rochet M."/>
            <person name="Gaillardin C."/>
            <person name="Tallada V.A."/>
            <person name="Garzon A."/>
            <person name="Thode G."/>
            <person name="Daga R.R."/>
            <person name="Cruzado L."/>
            <person name="Jimenez J."/>
            <person name="Sanchez M."/>
            <person name="del Rey F."/>
            <person name="Benito J."/>
            <person name="Dominguez A."/>
            <person name="Revuelta J.L."/>
            <person name="Moreno S."/>
            <person name="Armstrong J."/>
            <person name="Forsburg S.L."/>
            <person name="Cerutti L."/>
            <person name="Lowe T."/>
            <person name="McCombie W.R."/>
            <person name="Paulsen I."/>
            <person name="Potashkin J."/>
            <person name="Shpakovski G.V."/>
            <person name="Ussery D."/>
            <person name="Barrell B.G."/>
            <person name="Nurse P."/>
        </authorList>
    </citation>
    <scope>NUCLEOTIDE SEQUENCE [LARGE SCALE GENOMIC DNA]</scope>
    <source>
        <strain>972 / ATCC 24843</strain>
    </source>
</reference>
<reference key="2">
    <citation type="journal article" date="2006" name="Nat. Biotechnol.">
        <title>ORFeome cloning and global analysis of protein localization in the fission yeast Schizosaccharomyces pombe.</title>
        <authorList>
            <person name="Matsuyama A."/>
            <person name="Arai R."/>
            <person name="Yashiroda Y."/>
            <person name="Shirai A."/>
            <person name="Kamata A."/>
            <person name="Sekido S."/>
            <person name="Kobayashi Y."/>
            <person name="Hashimoto A."/>
            <person name="Hamamoto M."/>
            <person name="Hiraoka Y."/>
            <person name="Horinouchi S."/>
            <person name="Yoshida M."/>
        </authorList>
    </citation>
    <scope>SUBCELLULAR LOCATION [LARGE SCALE ANALYSIS]</scope>
</reference>
<protein>
    <recommendedName>
        <fullName>Uncharacterized transporter C3B8.04c</fullName>
    </recommendedName>
</protein>
<keyword id="KW-0256">Endoplasmic reticulum</keyword>
<keyword id="KW-0472">Membrane</keyword>
<keyword id="KW-1185">Reference proteome</keyword>
<keyword id="KW-0812">Transmembrane</keyword>
<keyword id="KW-1133">Transmembrane helix</keyword>
<keyword id="KW-0813">Transport</keyword>
<name>YBH4_SCHPO</name>